<dbReference type="EC" id="2.7.1.39" evidence="1"/>
<dbReference type="EMBL" id="CP001279">
    <property type="protein sequence ID" value="ACM93184.1"/>
    <property type="molecule type" value="Genomic_DNA"/>
</dbReference>
<dbReference type="RefSeq" id="WP_015902236.1">
    <property type="nucleotide sequence ID" value="NC_012115.1"/>
</dbReference>
<dbReference type="SMR" id="B9L6E6"/>
<dbReference type="STRING" id="598659.NAMH_1545"/>
<dbReference type="KEGG" id="nam:NAMH_1545"/>
<dbReference type="eggNOG" id="COG0083">
    <property type="taxonomic scope" value="Bacteria"/>
</dbReference>
<dbReference type="HOGENOM" id="CLU_041243_0_0_7"/>
<dbReference type="OrthoDB" id="9769912at2"/>
<dbReference type="UniPathway" id="UPA00050">
    <property type="reaction ID" value="UER00064"/>
</dbReference>
<dbReference type="Proteomes" id="UP000000448">
    <property type="component" value="Chromosome"/>
</dbReference>
<dbReference type="GO" id="GO:0005737">
    <property type="term" value="C:cytoplasm"/>
    <property type="evidence" value="ECO:0007669"/>
    <property type="project" value="UniProtKB-SubCell"/>
</dbReference>
<dbReference type="GO" id="GO:0005524">
    <property type="term" value="F:ATP binding"/>
    <property type="evidence" value="ECO:0007669"/>
    <property type="project" value="UniProtKB-UniRule"/>
</dbReference>
<dbReference type="GO" id="GO:0004413">
    <property type="term" value="F:homoserine kinase activity"/>
    <property type="evidence" value="ECO:0007669"/>
    <property type="project" value="UniProtKB-UniRule"/>
</dbReference>
<dbReference type="GO" id="GO:0009088">
    <property type="term" value="P:threonine biosynthetic process"/>
    <property type="evidence" value="ECO:0007669"/>
    <property type="project" value="UniProtKB-UniRule"/>
</dbReference>
<dbReference type="Gene3D" id="3.30.230.10">
    <property type="match status" value="1"/>
</dbReference>
<dbReference type="Gene3D" id="3.30.70.890">
    <property type="entry name" value="GHMP kinase, C-terminal domain"/>
    <property type="match status" value="1"/>
</dbReference>
<dbReference type="HAMAP" id="MF_00384">
    <property type="entry name" value="Homoser_kinase"/>
    <property type="match status" value="1"/>
</dbReference>
<dbReference type="InterPro" id="IPR013750">
    <property type="entry name" value="GHMP_kinase_C_dom"/>
</dbReference>
<dbReference type="InterPro" id="IPR036554">
    <property type="entry name" value="GHMP_kinase_C_sf"/>
</dbReference>
<dbReference type="InterPro" id="IPR006204">
    <property type="entry name" value="GHMP_kinase_N_dom"/>
</dbReference>
<dbReference type="InterPro" id="IPR006203">
    <property type="entry name" value="GHMP_knse_ATP-bd_CS"/>
</dbReference>
<dbReference type="InterPro" id="IPR000870">
    <property type="entry name" value="Homoserine_kinase"/>
</dbReference>
<dbReference type="InterPro" id="IPR020568">
    <property type="entry name" value="Ribosomal_Su5_D2-typ_SF"/>
</dbReference>
<dbReference type="InterPro" id="IPR014721">
    <property type="entry name" value="Ribsml_uS5_D2-typ_fold_subgr"/>
</dbReference>
<dbReference type="NCBIfam" id="TIGR00191">
    <property type="entry name" value="thrB"/>
    <property type="match status" value="1"/>
</dbReference>
<dbReference type="PANTHER" id="PTHR20861:SF1">
    <property type="entry name" value="HOMOSERINE KINASE"/>
    <property type="match status" value="1"/>
</dbReference>
<dbReference type="PANTHER" id="PTHR20861">
    <property type="entry name" value="HOMOSERINE/4-DIPHOSPHOCYTIDYL-2-C-METHYL-D-ERYTHRITOL KINASE"/>
    <property type="match status" value="1"/>
</dbReference>
<dbReference type="Pfam" id="PF08544">
    <property type="entry name" value="GHMP_kinases_C"/>
    <property type="match status" value="1"/>
</dbReference>
<dbReference type="Pfam" id="PF00288">
    <property type="entry name" value="GHMP_kinases_N"/>
    <property type="match status" value="1"/>
</dbReference>
<dbReference type="PIRSF" id="PIRSF000676">
    <property type="entry name" value="Homoser_kin"/>
    <property type="match status" value="1"/>
</dbReference>
<dbReference type="PRINTS" id="PR00958">
    <property type="entry name" value="HOMSERKINASE"/>
</dbReference>
<dbReference type="SUPFAM" id="SSF55060">
    <property type="entry name" value="GHMP Kinase, C-terminal domain"/>
    <property type="match status" value="1"/>
</dbReference>
<dbReference type="SUPFAM" id="SSF54211">
    <property type="entry name" value="Ribosomal protein S5 domain 2-like"/>
    <property type="match status" value="1"/>
</dbReference>
<dbReference type="PROSITE" id="PS00627">
    <property type="entry name" value="GHMP_KINASES_ATP"/>
    <property type="match status" value="1"/>
</dbReference>
<keyword id="KW-0028">Amino-acid biosynthesis</keyword>
<keyword id="KW-0067">ATP-binding</keyword>
<keyword id="KW-0963">Cytoplasm</keyword>
<keyword id="KW-0418">Kinase</keyword>
<keyword id="KW-0547">Nucleotide-binding</keyword>
<keyword id="KW-0791">Threonine biosynthesis</keyword>
<keyword id="KW-0808">Transferase</keyword>
<reference key="1">
    <citation type="journal article" date="2009" name="PLoS Genet.">
        <title>Adaptations to submarine hydrothermal environments exemplified by the genome of Nautilia profundicola.</title>
        <authorList>
            <person name="Campbell B.J."/>
            <person name="Smith J.L."/>
            <person name="Hanson T.E."/>
            <person name="Klotz M.G."/>
            <person name="Stein L.Y."/>
            <person name="Lee C.K."/>
            <person name="Wu D."/>
            <person name="Robinson J.M."/>
            <person name="Khouri H.M."/>
            <person name="Eisen J.A."/>
            <person name="Cary S.C."/>
        </authorList>
    </citation>
    <scope>NUCLEOTIDE SEQUENCE [LARGE SCALE GENOMIC DNA]</scope>
    <source>
        <strain>ATCC BAA-1463 / DSM 18972 / AmH</strain>
    </source>
</reference>
<proteinExistence type="inferred from homology"/>
<name>KHSE_NAUPA</name>
<accession>B9L6E6</accession>
<evidence type="ECO:0000255" key="1">
    <source>
        <dbReference type="HAMAP-Rule" id="MF_00384"/>
    </source>
</evidence>
<organism>
    <name type="scientific">Nautilia profundicola (strain ATCC BAA-1463 / DSM 18972 / AmH)</name>
    <dbReference type="NCBI Taxonomy" id="598659"/>
    <lineage>
        <taxon>Bacteria</taxon>
        <taxon>Pseudomonadati</taxon>
        <taxon>Campylobacterota</taxon>
        <taxon>Epsilonproteobacteria</taxon>
        <taxon>Nautiliales</taxon>
        <taxon>Nautiliaceae</taxon>
        <taxon>Nautilia</taxon>
    </lineage>
</organism>
<gene>
    <name evidence="1" type="primary">thrB</name>
    <name type="ordered locus">NAMH_1545</name>
</gene>
<feature type="chain" id="PRO_1000134257" description="Homoserine kinase">
    <location>
        <begin position="1"/>
        <end position="293"/>
    </location>
</feature>
<feature type="binding site" evidence="1">
    <location>
        <begin position="84"/>
        <end position="94"/>
    </location>
    <ligand>
        <name>ATP</name>
        <dbReference type="ChEBI" id="CHEBI:30616"/>
    </ligand>
</feature>
<comment type="function">
    <text evidence="1">Catalyzes the ATP-dependent phosphorylation of L-homoserine to L-homoserine phosphate.</text>
</comment>
<comment type="catalytic activity">
    <reaction evidence="1">
        <text>L-homoserine + ATP = O-phospho-L-homoserine + ADP + H(+)</text>
        <dbReference type="Rhea" id="RHEA:13985"/>
        <dbReference type="ChEBI" id="CHEBI:15378"/>
        <dbReference type="ChEBI" id="CHEBI:30616"/>
        <dbReference type="ChEBI" id="CHEBI:57476"/>
        <dbReference type="ChEBI" id="CHEBI:57590"/>
        <dbReference type="ChEBI" id="CHEBI:456216"/>
        <dbReference type="EC" id="2.7.1.39"/>
    </reaction>
</comment>
<comment type="pathway">
    <text evidence="1">Amino-acid biosynthesis; L-threonine biosynthesis; L-threonine from L-aspartate: step 4/5.</text>
</comment>
<comment type="subcellular location">
    <subcellularLocation>
        <location evidence="1">Cytoplasm</location>
    </subcellularLocation>
</comment>
<comment type="similarity">
    <text evidence="1">Belongs to the GHMP kinase family. Homoserine kinase subfamily.</text>
</comment>
<protein>
    <recommendedName>
        <fullName evidence="1">Homoserine kinase</fullName>
        <shortName evidence="1">HK</shortName>
        <shortName evidence="1">HSK</shortName>
        <ecNumber evidence="1">2.7.1.39</ecNumber>
    </recommendedName>
</protein>
<sequence>MVITVPATSANLGPGFDTLGLALNLRNEIEIVKSDYTSIEIYGENAEYLRTLKRNYFVEIFMDHYKNLTGKEDSFKFKFNNKIPLSRGLGSSSAVIIAAITAAYEMAQVPYKKDRIINLALSYEPHPDNITPAALGGFCVAKLRKNRVYFLKKFIPTYLRAVVVIPNRTISTQKSRNALKAHYNLKDIVTNISSASMITAAFFSEKFEILRNVVEDKIHQENRMKAVPELFKVREIALREGALMSTLSGSGSTFFNLAYKDDAYSIYNVLRDNFKDFTIKILQFDNVGVKVYN</sequence>